<keyword id="KW-0158">Chromosome</keyword>
<keyword id="KW-0175">Coiled coil</keyword>
<keyword id="KW-0903">Direct protein sequencing</keyword>
<keyword id="KW-0227">DNA damage</keyword>
<keyword id="KW-0234">DNA repair</keyword>
<keyword id="KW-0235">DNA replication</keyword>
<keyword id="KW-0539">Nucleus</keyword>
<keyword id="KW-1185">Reference proteome</keyword>
<keyword id="KW-0804">Transcription</keyword>
<keyword id="KW-0805">Transcription regulation</keyword>
<protein>
    <recommendedName>
        <fullName>FACT complex subunit SPT16</fullName>
    </recommendedName>
    <alternativeName>
        <fullName>DNA unwinding factor 140 kDa subunit</fullName>
        <shortName>DUF140</shortName>
    </alternativeName>
    <alternativeName>
        <fullName>Facilitates chromatin transcription complex subunit spt16</fullName>
    </alternativeName>
</protein>
<dbReference type="EMBL" id="AB004794">
    <property type="protein sequence ID" value="BAA76334.1"/>
    <property type="status" value="ALT_FRAME"/>
    <property type="molecule type" value="mRNA"/>
</dbReference>
<dbReference type="EMBL" id="BC072746">
    <property type="protein sequence ID" value="AAH72746.1"/>
    <property type="status" value="ALT_SEQ"/>
    <property type="molecule type" value="mRNA"/>
</dbReference>
<dbReference type="RefSeq" id="NP_001084166.1">
    <property type="nucleotide sequence ID" value="NM_001090697.1"/>
</dbReference>
<dbReference type="SMR" id="Q9W603"/>
<dbReference type="BioGRID" id="100670">
    <property type="interactions" value="1"/>
</dbReference>
<dbReference type="MEROPS" id="M24.974"/>
<dbReference type="GeneID" id="399345"/>
<dbReference type="KEGG" id="xla:399345"/>
<dbReference type="AGR" id="Xenbase:XB-GENE-979310"/>
<dbReference type="CTD" id="399345"/>
<dbReference type="Xenbase" id="XB-GENE-979310">
    <property type="gene designation" value="supt16h.S"/>
</dbReference>
<dbReference type="OMA" id="DWCLSAR"/>
<dbReference type="OrthoDB" id="10251642at2759"/>
<dbReference type="Proteomes" id="UP000186698">
    <property type="component" value="Chromosome 1S"/>
</dbReference>
<dbReference type="Bgee" id="399345">
    <property type="expression patterns" value="Expressed in gastrula and 19 other cell types or tissues"/>
</dbReference>
<dbReference type="GO" id="GO:0035101">
    <property type="term" value="C:FACT complex"/>
    <property type="evidence" value="ECO:0000318"/>
    <property type="project" value="GO_Central"/>
</dbReference>
<dbReference type="GO" id="GO:0031491">
    <property type="term" value="F:nucleosome binding"/>
    <property type="evidence" value="ECO:0000318"/>
    <property type="project" value="GO_Central"/>
</dbReference>
<dbReference type="GO" id="GO:0006281">
    <property type="term" value="P:DNA repair"/>
    <property type="evidence" value="ECO:0007669"/>
    <property type="project" value="UniProtKB-KW"/>
</dbReference>
<dbReference type="GO" id="GO:0006260">
    <property type="term" value="P:DNA replication"/>
    <property type="evidence" value="ECO:0007669"/>
    <property type="project" value="UniProtKB-KW"/>
</dbReference>
<dbReference type="GO" id="GO:0006368">
    <property type="term" value="P:transcription elongation by RNA polymerase II"/>
    <property type="evidence" value="ECO:0000318"/>
    <property type="project" value="GO_Central"/>
</dbReference>
<dbReference type="CDD" id="cd01091">
    <property type="entry name" value="CDC68-like"/>
    <property type="match status" value="1"/>
</dbReference>
<dbReference type="FunFam" id="2.30.29.150:FF:000003">
    <property type="entry name" value="FACT complex subunit SPT16"/>
    <property type="match status" value="1"/>
</dbReference>
<dbReference type="FunFam" id="2.30.29.30:FF:000017">
    <property type="entry name" value="FACT complex subunit SPT16"/>
    <property type="match status" value="1"/>
</dbReference>
<dbReference type="FunFam" id="2.30.29.210:FF:000001">
    <property type="entry name" value="FACT complex subunit spt16"/>
    <property type="match status" value="1"/>
</dbReference>
<dbReference type="FunFam" id="3.90.230.10:FF:000005">
    <property type="entry name" value="FACT complex subunit spt16"/>
    <property type="match status" value="1"/>
</dbReference>
<dbReference type="FunFam" id="3.40.350.10:FF:000005">
    <property type="entry name" value="SPT16 homolog, facilitates chromatin-remodeling subunit"/>
    <property type="match status" value="1"/>
</dbReference>
<dbReference type="Gene3D" id="2.30.29.150">
    <property type="match status" value="1"/>
</dbReference>
<dbReference type="Gene3D" id="3.90.230.10">
    <property type="entry name" value="Creatinase/methionine aminopeptidase superfamily"/>
    <property type="match status" value="1"/>
</dbReference>
<dbReference type="Gene3D" id="3.40.350.10">
    <property type="entry name" value="Creatinase/prolidase N-terminal domain"/>
    <property type="match status" value="1"/>
</dbReference>
<dbReference type="Gene3D" id="2.30.29.210">
    <property type="entry name" value="FACT complex subunit Spt16p/Cdc68p"/>
    <property type="match status" value="1"/>
</dbReference>
<dbReference type="Gene3D" id="2.30.29.30">
    <property type="entry name" value="Pleckstrin-homology domain (PH domain)/Phosphotyrosine-binding domain (PTB)"/>
    <property type="match status" value="1"/>
</dbReference>
<dbReference type="InterPro" id="IPR029149">
    <property type="entry name" value="Creatin/AminoP/Spt16_N"/>
</dbReference>
<dbReference type="InterPro" id="IPR036005">
    <property type="entry name" value="Creatinase/aminopeptidase-like"/>
</dbReference>
<dbReference type="InterPro" id="IPR029148">
    <property type="entry name" value="FACT-SPT16_Nlobe"/>
</dbReference>
<dbReference type="InterPro" id="IPR056595">
    <property type="entry name" value="Fact-SPT16_PH"/>
</dbReference>
<dbReference type="InterPro" id="IPR048969">
    <property type="entry name" value="FACT_SPT16_C"/>
</dbReference>
<dbReference type="InterPro" id="IPR013953">
    <property type="entry name" value="FACT_SPT16_M"/>
</dbReference>
<dbReference type="InterPro" id="IPR000994">
    <property type="entry name" value="Pept_M24"/>
</dbReference>
<dbReference type="InterPro" id="IPR011993">
    <property type="entry name" value="PH-like_dom_sf"/>
</dbReference>
<dbReference type="InterPro" id="IPR013719">
    <property type="entry name" value="RTT106/SPT16-like_middle_dom"/>
</dbReference>
<dbReference type="InterPro" id="IPR040258">
    <property type="entry name" value="Spt16"/>
</dbReference>
<dbReference type="InterPro" id="IPR033825">
    <property type="entry name" value="Spt16_M24"/>
</dbReference>
<dbReference type="PANTHER" id="PTHR13980">
    <property type="entry name" value="CDC68 RELATED"/>
    <property type="match status" value="1"/>
</dbReference>
<dbReference type="PANTHER" id="PTHR13980:SF15">
    <property type="entry name" value="FACT COMPLEX SUBUNIT SPT16"/>
    <property type="match status" value="1"/>
</dbReference>
<dbReference type="Pfam" id="PF14826">
    <property type="entry name" value="FACT-Spt16_Nlob"/>
    <property type="match status" value="1"/>
</dbReference>
<dbReference type="Pfam" id="PF00557">
    <property type="entry name" value="Peptidase_M24"/>
    <property type="match status" value="1"/>
</dbReference>
<dbReference type="Pfam" id="PF24824">
    <property type="entry name" value="PH_SPT16"/>
    <property type="match status" value="1"/>
</dbReference>
<dbReference type="Pfam" id="PF08512">
    <property type="entry name" value="Rttp106-like_middle"/>
    <property type="match status" value="1"/>
</dbReference>
<dbReference type="Pfam" id="PF08644">
    <property type="entry name" value="SPT16"/>
    <property type="match status" value="1"/>
</dbReference>
<dbReference type="Pfam" id="PF21091">
    <property type="entry name" value="SPT16_C"/>
    <property type="match status" value="1"/>
</dbReference>
<dbReference type="SMART" id="SM01285">
    <property type="entry name" value="FACT-Spt16_Nlob"/>
    <property type="match status" value="1"/>
</dbReference>
<dbReference type="SMART" id="SM01287">
    <property type="entry name" value="Rtt106"/>
    <property type="match status" value="1"/>
</dbReference>
<dbReference type="SMART" id="SM01286">
    <property type="entry name" value="SPT16"/>
    <property type="match status" value="1"/>
</dbReference>
<dbReference type="SUPFAM" id="SSF55920">
    <property type="entry name" value="Creatinase/aminopeptidase"/>
    <property type="match status" value="1"/>
</dbReference>
<proteinExistence type="evidence at protein level"/>
<name>SP16H_XENLA</name>
<comment type="function">
    <text evidence="1 4 5">Component of the FACT complex, a general chromatin factor that acts to reorganize nucleosomes. The FACT complex is involved in multiple processes that require DNA as a template such as mRNA elongation, DNA replication and DNA repair. During transcription elongation the FACT complex acts as a histone chaperone that both destabilizes and restores nucleosomal structure. It facilitates the passage of RNA polymerase II and transcription by promoting the dissociation of one histone H2A-H2B dimer from the nucleosome, then subsequently promotes the reestablishment of the nucleosome following the passage of RNA polymerase II.</text>
</comment>
<comment type="subunit">
    <text evidence="1">Component of the FACT complex (also called the DUF complex), a stable heterodimer of ssrp1 and supt16h. May also be a component of a ck2-spt16-ssrp1 complex composed of ssrp1, supt16h, csnk2a1, csnk2a2 and csnk2b. The FACT complex may also interact with vcp.</text>
</comment>
<comment type="subcellular location">
    <subcellularLocation>
        <location>Nucleus</location>
    </subcellularLocation>
    <subcellularLocation>
        <location>Chromosome</location>
    </subcellularLocation>
</comment>
<comment type="domain">
    <text evidence="1">The Glu-rich acidic region in C-terminus is essential for FACT activity.</text>
</comment>
<comment type="similarity">
    <text evidence="6">Belongs to the peptidase M24 family. SPT16 subfamily.</text>
</comment>
<comment type="caution">
    <text evidence="6">Although related to the peptidase M24 family, this protein lacks conserved active site residues suggesting that it may lack peptidase activity.</text>
</comment>
<comment type="sequence caution" evidence="6">
    <conflict type="miscellaneous discrepancy">
        <sequence resource="EMBL-CDS" id="AAH72746"/>
    </conflict>
    <text>Contaminating sequence. Potential poly-A sequence.</text>
</comment>
<comment type="sequence caution" evidence="6">
    <conflict type="frameshift">
        <sequence resource="EMBL-CDS" id="BAA76334"/>
    </conflict>
</comment>
<accession>Q9W603</accession>
<accession>Q6GQJ6</accession>
<organism>
    <name type="scientific">Xenopus laevis</name>
    <name type="common">African clawed frog</name>
    <dbReference type="NCBI Taxonomy" id="8355"/>
    <lineage>
        <taxon>Eukaryota</taxon>
        <taxon>Metazoa</taxon>
        <taxon>Chordata</taxon>
        <taxon>Craniata</taxon>
        <taxon>Vertebrata</taxon>
        <taxon>Euteleostomi</taxon>
        <taxon>Amphibia</taxon>
        <taxon>Batrachia</taxon>
        <taxon>Anura</taxon>
        <taxon>Pipoidea</taxon>
        <taxon>Pipidae</taxon>
        <taxon>Xenopodinae</taxon>
        <taxon>Xenopus</taxon>
        <taxon>Xenopus</taxon>
    </lineage>
</organism>
<gene>
    <name type="primary">supt16h</name>
</gene>
<evidence type="ECO:0000250" key="1"/>
<evidence type="ECO:0000255" key="2"/>
<evidence type="ECO:0000256" key="3">
    <source>
        <dbReference type="SAM" id="MobiDB-lite"/>
    </source>
</evidence>
<evidence type="ECO:0000269" key="4">
    <source>
    </source>
</evidence>
<evidence type="ECO:0000269" key="5">
    <source>
    </source>
</evidence>
<evidence type="ECO:0000305" key="6"/>
<sequence length="1035" mass="118440">MAVTLDKEAYYRRIKRFFGSWKKGDDEFANVDAIVVSVGVDEEIVYAKSTALQTWLFGYELTDTIMVFCEEKILFMASKKKVEFLKQIANTKGNENANGTPAITLLVREKQNESNKGNFDKMIEAIKVSKKGKRIGVFIKDKFPGDFMKSWYDILNKESFEKVDISASVAYTIAVKEEGELNLMKKAASITSDVFSKFFKDRVMEIVDADEKVRHGKLAESVEKAIEDKKYLGGTDPSTIEMCYPPIIQSGGNYNLKFSVVSDKNHMHFGAITCALGIRYKSYCSNLVRTLMVDPTQEMQENYNFLLQLQEELLKELKHGAKICDAYQVIMDQVKKQKPDLMSKITKTLGFAMGIEFREGSLVINNKNQYKLKKGMVFSVHLGLAELNNKMGKKPEEKTYALFVGDTVLVNEEGAATVLTNVKKKVKNVGIFLKKEDEEEEEEEKDEAEDLLGRGSRAAALLTERTRNEMTAEEKRRTHQKELATQLNDEAKRRLTEQKGGQQTMKARKSNVSYKNASQVPKEPELREMKLYIDKKYETVIMPVFGISTPFHIATIKNISMSVEGDYTYLRINFFCPGSALGRNEGNIFPNPEATFVKEITYRASNVKTPGDPSVPSLNLQNAFRIIKEVQKRYKTREAEEKEKEGIVKQDSLVINLNRSNPKLKDLYIRPNIAQKRMQGSLEAHVNGFRFTSVRGDKVDILYNNIKHALFQPCDGEMIIVLHFHLKNAIMFGKKRHTDVQFYTEVGEITTDLGKHQHMHDRDDLYAEQLEREMRHKLKTAFKNFIEKVESLTKEDLEFEIPFRDLGFNGAPYRSTCLLQPTSSSLVNTTEWPPFVVTLDEVELVHFERVQFHLKNFDMVIVYKEYGKKVTMINAIPMASLDPIKEWLNSCDIKYTEGVQSLNWTKIMKTIVDDPEGFFEQGGWSFLEPDGEGSDAAEGDSESELDDETFNPSEDEEEEEEDSDEDYSDETEDSVDSEESADSEEESGKDWDELEEEARKADRESLYEEVEEQKSGNRKRKGHAPLPNPSKKRKK</sequence>
<reference key="1">
    <citation type="journal article" date="1999" name="Curr. Biol.">
        <title>DNA unwinding factor involved in DNA replication in cell-free extracts of Xenopus eggs.</title>
        <authorList>
            <person name="Okuhara K."/>
            <person name="Ohta K."/>
            <person name="Seo H."/>
            <person name="Shioda M."/>
            <person name="Yamada T."/>
            <person name="Tanaka Y."/>
            <person name="Dohmae N."/>
            <person name="Seyama Y."/>
            <person name="Shibata T."/>
            <person name="Murofushi H."/>
        </authorList>
    </citation>
    <scope>NUCLEOTIDE SEQUENCE [MRNA]</scope>
    <scope>PROTEIN SEQUENCE OF 536-549 AND 894-902</scope>
    <scope>FUNCTION</scope>
    <scope>INTERACTION WITH SSRP1</scope>
    <source>
        <tissue>Egg</tissue>
    </source>
</reference>
<reference key="2">
    <citation type="submission" date="2004-06" db="EMBL/GenBank/DDBJ databases">
        <authorList>
            <consortium name="NIH - Xenopus Gene Collection (XGC) project"/>
        </authorList>
    </citation>
    <scope>NUCLEOTIDE SEQUENCE [LARGE SCALE MRNA] OF 1-640</scope>
    <source>
        <tissue>Ovary</tissue>
    </source>
</reference>
<reference key="3">
    <citation type="journal article" date="2000" name="FEBS Lett.">
        <title>p97 ATPase, an ATPase involved in membrane fusion, interacts with DNA unwinding factor (DUF) that functions in DNA replication.</title>
        <authorList>
            <person name="Yamada T."/>
            <person name="Okuhara K."/>
            <person name="Iwamatsu A."/>
            <person name="Seo H."/>
            <person name="Ohta K."/>
            <person name="Shibata T."/>
            <person name="Murofushi H."/>
        </authorList>
    </citation>
    <scope>INTERACTION WITH VCP</scope>
</reference>
<reference key="4">
    <citation type="journal article" date="2003" name="Biochem. Biophys. Res. Commun.">
        <title>Incorporation of DUF/FACT into chromatin enhances the accessibility of nucleosomal DNA.</title>
        <authorList>
            <person name="Seo H."/>
            <person name="Okuhara K."/>
            <person name="Kurumizaka H."/>
            <person name="Yamada T."/>
            <person name="Shibata T."/>
            <person name="Ohta K."/>
            <person name="Akiyama T."/>
            <person name="Murofushi H."/>
        </authorList>
    </citation>
    <scope>FUNCTION</scope>
</reference>
<feature type="chain" id="PRO_0000245171" description="FACT complex subunit SPT16">
    <location>
        <begin position="1"/>
        <end position="1035"/>
    </location>
</feature>
<feature type="region of interest" description="Disordered" evidence="3">
    <location>
        <begin position="491"/>
        <end position="520"/>
    </location>
</feature>
<feature type="region of interest" description="Disordered" evidence="3">
    <location>
        <begin position="920"/>
        <end position="1035"/>
    </location>
</feature>
<feature type="coiled-coil region" evidence="2">
    <location>
        <begin position="432"/>
        <end position="500"/>
    </location>
</feature>
<feature type="compositionally biased region" description="Polar residues" evidence="3">
    <location>
        <begin position="499"/>
        <end position="519"/>
    </location>
</feature>
<feature type="compositionally biased region" description="Acidic residues" evidence="3">
    <location>
        <begin position="929"/>
        <end position="985"/>
    </location>
</feature>
<feature type="compositionally biased region" description="Basic and acidic residues" evidence="3">
    <location>
        <begin position="986"/>
        <end position="1006"/>
    </location>
</feature>